<protein>
    <recommendedName>
        <fullName>4-deoxy-L-threo-5-hexosulose-uronate ketol-isomerase</fullName>
        <ecNumber>5.3.1.17</ecNumber>
    </recommendedName>
    <alternativeName>
        <fullName>5-keto-4-deoxyuronate isomerase</fullName>
    </alternativeName>
    <alternativeName>
        <fullName>DKI isomerase</fullName>
    </alternativeName>
</protein>
<comment type="function">
    <text evidence="1">Catalyzes the isomerization of 5-dehydro-4-deoxy-D-glucuronate to 3-deoxy-D-glycero-2,5-hexodiulosonate.</text>
</comment>
<comment type="catalytic activity">
    <reaction>
        <text>5-dehydro-4-deoxy-D-glucuronate = 3-deoxy-D-glycero-2,5-hexodiulosonate</text>
        <dbReference type="Rhea" id="RHEA:23896"/>
        <dbReference type="ChEBI" id="CHEBI:17117"/>
        <dbReference type="ChEBI" id="CHEBI:29071"/>
        <dbReference type="EC" id="5.3.1.17"/>
    </reaction>
</comment>
<comment type="cofactor">
    <cofactor evidence="1">
        <name>Zn(2+)</name>
        <dbReference type="ChEBI" id="CHEBI:29105"/>
    </cofactor>
    <text evidence="1">Binds 1 zinc ion per subunit.</text>
</comment>
<comment type="pathway">
    <text>Glycan metabolism; pectin degradation; 2-dehydro-3-deoxy-D-gluconate from pectin: step 4/5.</text>
</comment>
<comment type="subunit">
    <text evidence="1">Homohexamer.</text>
</comment>
<comment type="similarity">
    <text evidence="2">Belongs to the KduI family.</text>
</comment>
<keyword id="KW-0413">Isomerase</keyword>
<keyword id="KW-0479">Metal-binding</keyword>
<keyword id="KW-1185">Reference proteome</keyword>
<keyword id="KW-0862">Zinc</keyword>
<name>KDUI_ECOL6</name>
<gene>
    <name type="primary">kduI</name>
    <name type="ordered locus">c3440</name>
</gene>
<proteinExistence type="inferred from homology"/>
<dbReference type="EC" id="5.3.1.17"/>
<dbReference type="EMBL" id="AE014075">
    <property type="protein sequence ID" value="AAN81885.1"/>
    <property type="molecule type" value="Genomic_DNA"/>
</dbReference>
<dbReference type="RefSeq" id="WP_000383248.1">
    <property type="nucleotide sequence ID" value="NZ_CP051263.1"/>
</dbReference>
<dbReference type="SMR" id="Q8FE97"/>
<dbReference type="STRING" id="199310.c3440"/>
<dbReference type="GeneID" id="75172927"/>
<dbReference type="KEGG" id="ecc:c3440"/>
<dbReference type="eggNOG" id="COG3717">
    <property type="taxonomic scope" value="Bacteria"/>
</dbReference>
<dbReference type="HOGENOM" id="CLU_062609_0_0_6"/>
<dbReference type="BioCyc" id="ECOL199310:C3440-MONOMER"/>
<dbReference type="UniPathway" id="UPA00545">
    <property type="reaction ID" value="UER00826"/>
</dbReference>
<dbReference type="Proteomes" id="UP000001410">
    <property type="component" value="Chromosome"/>
</dbReference>
<dbReference type="GO" id="GO:0008697">
    <property type="term" value="F:4-deoxy-L-threo-5-hexosulose-uronate ketol-isomerase activity"/>
    <property type="evidence" value="ECO:0007669"/>
    <property type="project" value="UniProtKB-UniRule"/>
</dbReference>
<dbReference type="GO" id="GO:0008270">
    <property type="term" value="F:zinc ion binding"/>
    <property type="evidence" value="ECO:0007669"/>
    <property type="project" value="UniProtKB-UniRule"/>
</dbReference>
<dbReference type="GO" id="GO:0019698">
    <property type="term" value="P:D-galacturonate catabolic process"/>
    <property type="evidence" value="ECO:0007669"/>
    <property type="project" value="TreeGrafter"/>
</dbReference>
<dbReference type="GO" id="GO:0042840">
    <property type="term" value="P:D-glucuronate catabolic process"/>
    <property type="evidence" value="ECO:0007669"/>
    <property type="project" value="TreeGrafter"/>
</dbReference>
<dbReference type="GO" id="GO:0045490">
    <property type="term" value="P:pectin catabolic process"/>
    <property type="evidence" value="ECO:0007669"/>
    <property type="project" value="UniProtKB-UniRule"/>
</dbReference>
<dbReference type="CDD" id="cd20491">
    <property type="entry name" value="cupin_KduI_C"/>
    <property type="match status" value="1"/>
</dbReference>
<dbReference type="CDD" id="cd20294">
    <property type="entry name" value="cupin_KduI_N"/>
    <property type="match status" value="1"/>
</dbReference>
<dbReference type="FunFam" id="2.60.120.10:FF:000018">
    <property type="entry name" value="4-deoxy-L-threo-5-hexosulose-uronate ketol-isomerase"/>
    <property type="match status" value="1"/>
</dbReference>
<dbReference type="FunFam" id="2.60.120.520:FF:000001">
    <property type="entry name" value="4-deoxy-L-threo-5-hexosulose-uronate ketol-isomerase"/>
    <property type="match status" value="1"/>
</dbReference>
<dbReference type="Gene3D" id="2.60.120.10">
    <property type="entry name" value="Jelly Rolls"/>
    <property type="match status" value="1"/>
</dbReference>
<dbReference type="Gene3D" id="2.60.120.520">
    <property type="entry name" value="pectin degrading enzyme 5-keto 4- deoxyuronate isomerase, domain 1"/>
    <property type="match status" value="1"/>
</dbReference>
<dbReference type="HAMAP" id="MF_00687">
    <property type="entry name" value="KduI"/>
    <property type="match status" value="1"/>
</dbReference>
<dbReference type="InterPro" id="IPR007045">
    <property type="entry name" value="KduI"/>
</dbReference>
<dbReference type="InterPro" id="IPR021120">
    <property type="entry name" value="KduI/IolB_isomerase"/>
</dbReference>
<dbReference type="InterPro" id="IPR027449">
    <property type="entry name" value="KduI_N"/>
</dbReference>
<dbReference type="InterPro" id="IPR014710">
    <property type="entry name" value="RmlC-like_jellyroll"/>
</dbReference>
<dbReference type="InterPro" id="IPR011051">
    <property type="entry name" value="RmlC_Cupin_sf"/>
</dbReference>
<dbReference type="NCBIfam" id="NF002091">
    <property type="entry name" value="PRK00924.1"/>
    <property type="match status" value="1"/>
</dbReference>
<dbReference type="PANTHER" id="PTHR38461">
    <property type="entry name" value="4-DEOXY-L-THREO-5-HEXOSULOSE-URONATE KETOL-ISOMERASE"/>
    <property type="match status" value="1"/>
</dbReference>
<dbReference type="PANTHER" id="PTHR38461:SF1">
    <property type="entry name" value="4-DEOXY-L-THREO-5-HEXOSULOSE-URONATE KETOL-ISOMERASE"/>
    <property type="match status" value="1"/>
</dbReference>
<dbReference type="Pfam" id="PF04962">
    <property type="entry name" value="KduI"/>
    <property type="match status" value="1"/>
</dbReference>
<dbReference type="PIRSF" id="PIRSF006625">
    <property type="entry name" value="KduI"/>
    <property type="match status" value="1"/>
</dbReference>
<dbReference type="SUPFAM" id="SSF51182">
    <property type="entry name" value="RmlC-like cupins"/>
    <property type="match status" value="1"/>
</dbReference>
<evidence type="ECO:0000250" key="1"/>
<evidence type="ECO:0000305" key="2"/>
<organism>
    <name type="scientific">Escherichia coli O6:H1 (strain CFT073 / ATCC 700928 / UPEC)</name>
    <dbReference type="NCBI Taxonomy" id="199310"/>
    <lineage>
        <taxon>Bacteria</taxon>
        <taxon>Pseudomonadati</taxon>
        <taxon>Pseudomonadota</taxon>
        <taxon>Gammaproteobacteria</taxon>
        <taxon>Enterobacterales</taxon>
        <taxon>Enterobacteriaceae</taxon>
        <taxon>Escherichia</taxon>
    </lineage>
</organism>
<sequence>MDVRQSIHSAHAKTLDTQGLRNEFLVEKVFVADEYTMVYSHIDRIIVGGIMPVTKTVSVGGEVGKQLGVSYFLERRELGVINIGGAGTITVDGQCYEIGHRDALYVGKGAKEVVFASIDTATPAKFYYNCAPAHTTYPTKKVTPDEVSPVTLGDNLTSNRRTINKYFVPDVLETCQLSMGLTELAPGNLWNTMPCHTHERRMEVYFYFNMDDDACVFHMMGQPQETRHIVMHNEQAVISPSWSIHSGVGTKAYTFIWGMVGENQVFDDMDHVAVKDLR</sequence>
<reference key="1">
    <citation type="journal article" date="2002" name="Proc. Natl. Acad. Sci. U.S.A.">
        <title>Extensive mosaic structure revealed by the complete genome sequence of uropathogenic Escherichia coli.</title>
        <authorList>
            <person name="Welch R.A."/>
            <person name="Burland V."/>
            <person name="Plunkett G. III"/>
            <person name="Redford P."/>
            <person name="Roesch P."/>
            <person name="Rasko D."/>
            <person name="Buckles E.L."/>
            <person name="Liou S.-R."/>
            <person name="Boutin A."/>
            <person name="Hackett J."/>
            <person name="Stroud D."/>
            <person name="Mayhew G.F."/>
            <person name="Rose D.J."/>
            <person name="Zhou S."/>
            <person name="Schwartz D.C."/>
            <person name="Perna N.T."/>
            <person name="Mobley H.L.T."/>
            <person name="Donnenberg M.S."/>
            <person name="Blattner F.R."/>
        </authorList>
    </citation>
    <scope>NUCLEOTIDE SEQUENCE [LARGE SCALE GENOMIC DNA]</scope>
    <source>
        <strain>CFT073 / ATCC 700928 / UPEC</strain>
    </source>
</reference>
<accession>Q8FE97</accession>
<feature type="chain" id="PRO_0000215487" description="4-deoxy-L-threo-5-hexosulose-uronate ketol-isomerase">
    <location>
        <begin position="1"/>
        <end position="278"/>
    </location>
</feature>
<feature type="binding site" evidence="1">
    <location>
        <position position="196"/>
    </location>
    <ligand>
        <name>Zn(2+)</name>
        <dbReference type="ChEBI" id="CHEBI:29105"/>
    </ligand>
</feature>
<feature type="binding site" evidence="1">
    <location>
        <position position="198"/>
    </location>
    <ligand>
        <name>Zn(2+)</name>
        <dbReference type="ChEBI" id="CHEBI:29105"/>
    </ligand>
</feature>
<feature type="binding site" evidence="1">
    <location>
        <position position="203"/>
    </location>
    <ligand>
        <name>Zn(2+)</name>
        <dbReference type="ChEBI" id="CHEBI:29105"/>
    </ligand>
</feature>
<feature type="binding site" evidence="1">
    <location>
        <position position="245"/>
    </location>
    <ligand>
        <name>Zn(2+)</name>
        <dbReference type="ChEBI" id="CHEBI:29105"/>
    </ligand>
</feature>